<accession>C0R541</accession>
<keyword id="KW-0488">Methylation</keyword>
<keyword id="KW-0687">Ribonucleoprotein</keyword>
<keyword id="KW-0689">Ribosomal protein</keyword>
<keyword id="KW-0694">RNA-binding</keyword>
<keyword id="KW-0699">rRNA-binding</keyword>
<keyword id="KW-0820">tRNA-binding</keyword>
<comment type="function">
    <text evidence="2">With S4 and S5 plays an important role in translational accuracy.</text>
</comment>
<comment type="function">
    <text evidence="2">Interacts with and stabilizes bases of the 16S rRNA that are involved in tRNA selection in the A site and with the mRNA backbone. Located at the interface of the 30S and 50S subunits, it traverses the body of the 30S subunit contacting proteins on the other side and probably holding the rRNA structure together. The combined cluster of proteins S8, S12 and S17 appears to hold together the shoulder and platform of the 30S subunit.</text>
</comment>
<comment type="subunit">
    <text evidence="2">Part of the 30S ribosomal subunit. Contacts proteins S8 and S17. May interact with IF1 in the 30S initiation complex.</text>
</comment>
<comment type="similarity">
    <text evidence="2">Belongs to the universal ribosomal protein uS12 family.</text>
</comment>
<gene>
    <name evidence="2" type="primary">rpsL</name>
    <name type="ordered locus">WRi_000120</name>
</gene>
<organism>
    <name type="scientific">Wolbachia sp. subsp. Drosophila simulans (strain wRi)</name>
    <dbReference type="NCBI Taxonomy" id="66084"/>
    <lineage>
        <taxon>Bacteria</taxon>
        <taxon>Pseudomonadati</taxon>
        <taxon>Pseudomonadota</taxon>
        <taxon>Alphaproteobacteria</taxon>
        <taxon>Rickettsiales</taxon>
        <taxon>Anaplasmataceae</taxon>
        <taxon>Wolbachieae</taxon>
        <taxon>Wolbachia</taxon>
    </lineage>
</organism>
<name>RS12_WOLWR</name>
<reference key="1">
    <citation type="journal article" date="2009" name="Proc. Natl. Acad. Sci. U.S.A.">
        <title>The mosaic genome structure of the Wolbachia wRi strain infecting Drosophila simulans.</title>
        <authorList>
            <person name="Klasson L."/>
            <person name="Westberg J."/>
            <person name="Sapountzis P."/>
            <person name="Naeslund K."/>
            <person name="Lutnaes Y."/>
            <person name="Darby A.C."/>
            <person name="Veneti Z."/>
            <person name="Chen L."/>
            <person name="Braig H.R."/>
            <person name="Garrett R."/>
            <person name="Bourtzis K."/>
            <person name="Andersson S.G."/>
        </authorList>
    </citation>
    <scope>NUCLEOTIDE SEQUENCE [LARGE SCALE GENOMIC DNA]</scope>
    <source>
        <strain>wRi</strain>
    </source>
</reference>
<dbReference type="EMBL" id="CP001391">
    <property type="protein sequence ID" value="ACN94883.1"/>
    <property type="molecule type" value="Genomic_DNA"/>
</dbReference>
<dbReference type="RefSeq" id="WP_007549314.1">
    <property type="nucleotide sequence ID" value="NZ_MKIF01000111.1"/>
</dbReference>
<dbReference type="SMR" id="C0R541"/>
<dbReference type="STRING" id="66084.WRi_000120"/>
<dbReference type="KEGG" id="wri:WRi_000120"/>
<dbReference type="HOGENOM" id="CLU_104295_1_2_5"/>
<dbReference type="Proteomes" id="UP000001293">
    <property type="component" value="Chromosome"/>
</dbReference>
<dbReference type="GO" id="GO:0015935">
    <property type="term" value="C:small ribosomal subunit"/>
    <property type="evidence" value="ECO:0007669"/>
    <property type="project" value="InterPro"/>
</dbReference>
<dbReference type="GO" id="GO:0019843">
    <property type="term" value="F:rRNA binding"/>
    <property type="evidence" value="ECO:0007669"/>
    <property type="project" value="UniProtKB-UniRule"/>
</dbReference>
<dbReference type="GO" id="GO:0003735">
    <property type="term" value="F:structural constituent of ribosome"/>
    <property type="evidence" value="ECO:0007669"/>
    <property type="project" value="InterPro"/>
</dbReference>
<dbReference type="GO" id="GO:0000049">
    <property type="term" value="F:tRNA binding"/>
    <property type="evidence" value="ECO:0007669"/>
    <property type="project" value="UniProtKB-UniRule"/>
</dbReference>
<dbReference type="GO" id="GO:0006412">
    <property type="term" value="P:translation"/>
    <property type="evidence" value="ECO:0007669"/>
    <property type="project" value="UniProtKB-UniRule"/>
</dbReference>
<dbReference type="CDD" id="cd03368">
    <property type="entry name" value="Ribosomal_S12"/>
    <property type="match status" value="1"/>
</dbReference>
<dbReference type="FunFam" id="2.40.50.140:FF:000001">
    <property type="entry name" value="30S ribosomal protein S12"/>
    <property type="match status" value="1"/>
</dbReference>
<dbReference type="Gene3D" id="2.40.50.140">
    <property type="entry name" value="Nucleic acid-binding proteins"/>
    <property type="match status" value="1"/>
</dbReference>
<dbReference type="HAMAP" id="MF_00403_B">
    <property type="entry name" value="Ribosomal_uS12_B"/>
    <property type="match status" value="1"/>
</dbReference>
<dbReference type="InterPro" id="IPR012340">
    <property type="entry name" value="NA-bd_OB-fold"/>
</dbReference>
<dbReference type="InterPro" id="IPR006032">
    <property type="entry name" value="Ribosomal_uS12"/>
</dbReference>
<dbReference type="InterPro" id="IPR005679">
    <property type="entry name" value="Ribosomal_uS12_bac"/>
</dbReference>
<dbReference type="NCBIfam" id="TIGR00981">
    <property type="entry name" value="rpsL_bact"/>
    <property type="match status" value="1"/>
</dbReference>
<dbReference type="PANTHER" id="PTHR11652">
    <property type="entry name" value="30S RIBOSOMAL PROTEIN S12 FAMILY MEMBER"/>
    <property type="match status" value="1"/>
</dbReference>
<dbReference type="Pfam" id="PF00164">
    <property type="entry name" value="Ribosom_S12_S23"/>
    <property type="match status" value="1"/>
</dbReference>
<dbReference type="PIRSF" id="PIRSF002133">
    <property type="entry name" value="Ribosomal_S12/S23"/>
    <property type="match status" value="1"/>
</dbReference>
<dbReference type="PRINTS" id="PR01034">
    <property type="entry name" value="RIBOSOMALS12"/>
</dbReference>
<dbReference type="SUPFAM" id="SSF50249">
    <property type="entry name" value="Nucleic acid-binding proteins"/>
    <property type="match status" value="1"/>
</dbReference>
<dbReference type="PROSITE" id="PS00055">
    <property type="entry name" value="RIBOSOMAL_S12"/>
    <property type="match status" value="1"/>
</dbReference>
<sequence>MPTINQLIRKGRLGLTHKKKVPALGKSNPQRRGVCTKVYTTTPRKPNSALRKVARVKISGYGEVTAYIPGEGHNLQEHSVVLIRGGRVKDLPGVRYHIIRGALDLRGVQNRKKARSKYGVKKSG</sequence>
<protein>
    <recommendedName>
        <fullName evidence="2">Small ribosomal subunit protein uS12</fullName>
    </recommendedName>
    <alternativeName>
        <fullName evidence="3">30S ribosomal protein S12</fullName>
    </alternativeName>
</protein>
<feature type="chain" id="PRO_1000194224" description="Small ribosomal subunit protein uS12">
    <location>
        <begin position="1"/>
        <end position="124"/>
    </location>
</feature>
<feature type="modified residue" description="3-methylthioaspartic acid" evidence="1">
    <location>
        <position position="90"/>
    </location>
</feature>
<evidence type="ECO:0000250" key="1"/>
<evidence type="ECO:0000255" key="2">
    <source>
        <dbReference type="HAMAP-Rule" id="MF_00403"/>
    </source>
</evidence>
<evidence type="ECO:0000305" key="3"/>
<proteinExistence type="inferred from homology"/>